<evidence type="ECO:0000255" key="1">
    <source>
        <dbReference type="HAMAP-Rule" id="MF_00537"/>
    </source>
</evidence>
<evidence type="ECO:0000305" key="2"/>
<organism>
    <name type="scientific">Wolbachia sp. subsp. Brugia malayi (strain TRS)</name>
    <dbReference type="NCBI Taxonomy" id="292805"/>
    <lineage>
        <taxon>Bacteria</taxon>
        <taxon>Pseudomonadati</taxon>
        <taxon>Pseudomonadota</taxon>
        <taxon>Alphaproteobacteria</taxon>
        <taxon>Rickettsiales</taxon>
        <taxon>Anaplasmataceae</taxon>
        <taxon>Wolbachieae</taxon>
        <taxon>Wolbachia</taxon>
    </lineage>
</organism>
<keyword id="KW-1185">Reference proteome</keyword>
<keyword id="KW-0687">Ribonucleoprotein</keyword>
<keyword id="KW-0689">Ribosomal protein</keyword>
<keyword id="KW-0694">RNA-binding</keyword>
<keyword id="KW-0699">rRNA-binding</keyword>
<protein>
    <recommendedName>
        <fullName evidence="1">Small ribosomal subunit protein uS14</fullName>
    </recommendedName>
    <alternativeName>
        <fullName evidence="2">30S ribosomal protein S14</fullName>
    </alternativeName>
</protein>
<proteinExistence type="inferred from homology"/>
<reference key="1">
    <citation type="journal article" date="2005" name="PLoS Biol.">
        <title>The Wolbachia genome of Brugia malayi: endosymbiont evolution within a human pathogenic nematode.</title>
        <authorList>
            <person name="Foster J."/>
            <person name="Ganatra M."/>
            <person name="Kamal I."/>
            <person name="Ware J."/>
            <person name="Makarova K."/>
            <person name="Ivanova N."/>
            <person name="Bhattacharyya A."/>
            <person name="Kapatral V."/>
            <person name="Kumar S."/>
            <person name="Posfai J."/>
            <person name="Vincze T."/>
            <person name="Ingram J."/>
            <person name="Moran L."/>
            <person name="Lapidus A."/>
            <person name="Omelchenko M."/>
            <person name="Kyrpides N."/>
            <person name="Ghedin E."/>
            <person name="Wang S."/>
            <person name="Goltsman E."/>
            <person name="Joukov V."/>
            <person name="Ostrovskaya O."/>
            <person name="Tsukerman K."/>
            <person name="Mazur M."/>
            <person name="Comb D."/>
            <person name="Koonin E."/>
            <person name="Slatko B."/>
        </authorList>
    </citation>
    <scope>NUCLEOTIDE SEQUENCE [LARGE SCALE GENOMIC DNA]</scope>
    <source>
        <strain>TRS</strain>
    </source>
</reference>
<feature type="chain" id="PRO_1000128637" description="Small ribosomal subunit protein uS14">
    <location>
        <begin position="1"/>
        <end position="102"/>
    </location>
</feature>
<gene>
    <name evidence="1" type="primary">rpsN</name>
    <name type="ordered locus">Wbm0328</name>
</gene>
<comment type="function">
    <text evidence="1">Binds 16S rRNA, required for the assembly of 30S particles and may also be responsible for determining the conformation of the 16S rRNA at the A site.</text>
</comment>
<comment type="subunit">
    <text evidence="1">Part of the 30S ribosomal subunit. Contacts proteins S3 and S10.</text>
</comment>
<comment type="similarity">
    <text evidence="1">Belongs to the universal ribosomal protein uS14 family.</text>
</comment>
<accession>Q5GSV7</accession>
<sequence length="102" mass="11827">MAKKSIVQRNLRRIKLCDQYGEKRERLKSIINNKNIPIGERFAAQNKLIKELPRDSSKIRIRNRCALTGRPRGVYRKFGLCRIVLRGLCSFGKIPGITKSSW</sequence>
<dbReference type="EMBL" id="AE017321">
    <property type="protein sequence ID" value="AAW70917.1"/>
    <property type="molecule type" value="Genomic_DNA"/>
</dbReference>
<dbReference type="RefSeq" id="WP_011256527.1">
    <property type="nucleotide sequence ID" value="NC_006833.1"/>
</dbReference>
<dbReference type="SMR" id="Q5GSV7"/>
<dbReference type="STRING" id="292805.Wbm0328"/>
<dbReference type="KEGG" id="wbm:Wbm0328"/>
<dbReference type="eggNOG" id="COG0199">
    <property type="taxonomic scope" value="Bacteria"/>
</dbReference>
<dbReference type="HOGENOM" id="CLU_139869_0_0_5"/>
<dbReference type="Proteomes" id="UP000000534">
    <property type="component" value="Chromosome"/>
</dbReference>
<dbReference type="GO" id="GO:0005737">
    <property type="term" value="C:cytoplasm"/>
    <property type="evidence" value="ECO:0007669"/>
    <property type="project" value="UniProtKB-ARBA"/>
</dbReference>
<dbReference type="GO" id="GO:0015935">
    <property type="term" value="C:small ribosomal subunit"/>
    <property type="evidence" value="ECO:0007669"/>
    <property type="project" value="TreeGrafter"/>
</dbReference>
<dbReference type="GO" id="GO:0019843">
    <property type="term" value="F:rRNA binding"/>
    <property type="evidence" value="ECO:0007669"/>
    <property type="project" value="UniProtKB-UniRule"/>
</dbReference>
<dbReference type="GO" id="GO:0003735">
    <property type="term" value="F:structural constituent of ribosome"/>
    <property type="evidence" value="ECO:0007669"/>
    <property type="project" value="InterPro"/>
</dbReference>
<dbReference type="GO" id="GO:0006412">
    <property type="term" value="P:translation"/>
    <property type="evidence" value="ECO:0007669"/>
    <property type="project" value="UniProtKB-UniRule"/>
</dbReference>
<dbReference type="FunFam" id="1.10.287.1480:FF:000001">
    <property type="entry name" value="30S ribosomal protein S14"/>
    <property type="match status" value="1"/>
</dbReference>
<dbReference type="Gene3D" id="1.10.287.1480">
    <property type="match status" value="1"/>
</dbReference>
<dbReference type="HAMAP" id="MF_00537">
    <property type="entry name" value="Ribosomal_uS14_1"/>
    <property type="match status" value="1"/>
</dbReference>
<dbReference type="InterPro" id="IPR001209">
    <property type="entry name" value="Ribosomal_uS14"/>
</dbReference>
<dbReference type="InterPro" id="IPR023036">
    <property type="entry name" value="Ribosomal_uS14_bac/plastid"/>
</dbReference>
<dbReference type="InterPro" id="IPR018271">
    <property type="entry name" value="Ribosomal_uS14_CS"/>
</dbReference>
<dbReference type="NCBIfam" id="NF006477">
    <property type="entry name" value="PRK08881.1"/>
    <property type="match status" value="1"/>
</dbReference>
<dbReference type="PANTHER" id="PTHR19836">
    <property type="entry name" value="30S RIBOSOMAL PROTEIN S14"/>
    <property type="match status" value="1"/>
</dbReference>
<dbReference type="PANTHER" id="PTHR19836:SF19">
    <property type="entry name" value="SMALL RIBOSOMAL SUBUNIT PROTEIN US14M"/>
    <property type="match status" value="1"/>
</dbReference>
<dbReference type="Pfam" id="PF00253">
    <property type="entry name" value="Ribosomal_S14"/>
    <property type="match status" value="1"/>
</dbReference>
<dbReference type="SUPFAM" id="SSF57716">
    <property type="entry name" value="Glucocorticoid receptor-like (DNA-binding domain)"/>
    <property type="match status" value="1"/>
</dbReference>
<dbReference type="PROSITE" id="PS00527">
    <property type="entry name" value="RIBOSOMAL_S14"/>
    <property type="match status" value="1"/>
</dbReference>
<name>RS14_WOLTR</name>